<proteinExistence type="inferred from homology"/>
<comment type="function">
    <text evidence="1">Cell division protein that is part of the divisome complex and is recruited early to the Z-ring. Probably stimulates Z-ring formation, perhaps through the cross-linking of FtsZ protofilaments. Its function overlaps with FtsA.</text>
</comment>
<comment type="subunit">
    <text evidence="1">Homodimer. Interacts with FtsZ.</text>
</comment>
<comment type="subcellular location">
    <subcellularLocation>
        <location evidence="1">Cytoplasm</location>
    </subcellularLocation>
    <text evidence="1">Localizes to the division site, in a FtsZ-dependent manner.</text>
</comment>
<comment type="similarity">
    <text evidence="1">Belongs to the SepF family.</text>
</comment>
<dbReference type="EMBL" id="CP000509">
    <property type="protein sequence ID" value="ABL82559.1"/>
    <property type="molecule type" value="Genomic_DNA"/>
</dbReference>
<dbReference type="RefSeq" id="WP_011756493.1">
    <property type="nucleotide sequence ID" value="NC_008699.1"/>
</dbReference>
<dbReference type="SMR" id="A1SL74"/>
<dbReference type="STRING" id="196162.Noca_3057"/>
<dbReference type="KEGG" id="nca:Noca_3057"/>
<dbReference type="eggNOG" id="COG1799">
    <property type="taxonomic scope" value="Bacteria"/>
</dbReference>
<dbReference type="HOGENOM" id="CLU_078499_0_0_11"/>
<dbReference type="OrthoDB" id="3731101at2"/>
<dbReference type="Proteomes" id="UP000000640">
    <property type="component" value="Chromosome"/>
</dbReference>
<dbReference type="GO" id="GO:0005737">
    <property type="term" value="C:cytoplasm"/>
    <property type="evidence" value="ECO:0007669"/>
    <property type="project" value="UniProtKB-SubCell"/>
</dbReference>
<dbReference type="GO" id="GO:0000917">
    <property type="term" value="P:division septum assembly"/>
    <property type="evidence" value="ECO:0007669"/>
    <property type="project" value="UniProtKB-KW"/>
</dbReference>
<dbReference type="GO" id="GO:0043093">
    <property type="term" value="P:FtsZ-dependent cytokinesis"/>
    <property type="evidence" value="ECO:0007669"/>
    <property type="project" value="UniProtKB-UniRule"/>
</dbReference>
<dbReference type="Gene3D" id="3.30.110.150">
    <property type="entry name" value="SepF-like protein"/>
    <property type="match status" value="1"/>
</dbReference>
<dbReference type="HAMAP" id="MF_01197">
    <property type="entry name" value="SepF"/>
    <property type="match status" value="1"/>
</dbReference>
<dbReference type="InterPro" id="IPR023052">
    <property type="entry name" value="Cell_div_SepF"/>
</dbReference>
<dbReference type="InterPro" id="IPR007561">
    <property type="entry name" value="Cell_div_SepF/SepF-rel"/>
</dbReference>
<dbReference type="InterPro" id="IPR038594">
    <property type="entry name" value="SepF-like_sf"/>
</dbReference>
<dbReference type="PANTHER" id="PTHR35798">
    <property type="entry name" value="CELL DIVISION PROTEIN SEPF"/>
    <property type="match status" value="1"/>
</dbReference>
<dbReference type="PANTHER" id="PTHR35798:SF1">
    <property type="entry name" value="CELL DIVISION PROTEIN SEPF"/>
    <property type="match status" value="1"/>
</dbReference>
<dbReference type="Pfam" id="PF04472">
    <property type="entry name" value="SepF"/>
    <property type="match status" value="1"/>
</dbReference>
<feature type="chain" id="PRO_0000334052" description="Cell division protein SepF">
    <location>
        <begin position="1"/>
        <end position="165"/>
    </location>
</feature>
<feature type="region of interest" description="Disordered" evidence="2">
    <location>
        <begin position="23"/>
        <end position="75"/>
    </location>
</feature>
<gene>
    <name evidence="1" type="primary">sepF</name>
    <name type="ordered locus">Noca_3057</name>
</gene>
<name>SEPF_NOCSJ</name>
<protein>
    <recommendedName>
        <fullName evidence="1">Cell division protein SepF</fullName>
    </recommendedName>
</protein>
<evidence type="ECO:0000255" key="1">
    <source>
        <dbReference type="HAMAP-Rule" id="MF_01197"/>
    </source>
</evidence>
<evidence type="ECO:0000256" key="2">
    <source>
        <dbReference type="SAM" id="MobiDB-lite"/>
    </source>
</evidence>
<reference key="1">
    <citation type="submission" date="2006-12" db="EMBL/GenBank/DDBJ databases">
        <title>Complete sequence of chromosome 1 of Nocardioides sp. JS614.</title>
        <authorList>
            <person name="Copeland A."/>
            <person name="Lucas S."/>
            <person name="Lapidus A."/>
            <person name="Barry K."/>
            <person name="Detter J.C."/>
            <person name="Glavina del Rio T."/>
            <person name="Hammon N."/>
            <person name="Israni S."/>
            <person name="Dalin E."/>
            <person name="Tice H."/>
            <person name="Pitluck S."/>
            <person name="Thompson L.S."/>
            <person name="Brettin T."/>
            <person name="Bruce D."/>
            <person name="Han C."/>
            <person name="Tapia R."/>
            <person name="Schmutz J."/>
            <person name="Larimer F."/>
            <person name="Land M."/>
            <person name="Hauser L."/>
            <person name="Kyrpides N."/>
            <person name="Kim E."/>
            <person name="Mattes T."/>
            <person name="Gossett J."/>
            <person name="Richardson P."/>
        </authorList>
    </citation>
    <scope>NUCLEOTIDE SEQUENCE [LARGE SCALE GENOMIC DNA]</scope>
    <source>
        <strain>ATCC BAA-499 / JS614</strain>
    </source>
</reference>
<keyword id="KW-0131">Cell cycle</keyword>
<keyword id="KW-0132">Cell division</keyword>
<keyword id="KW-0963">Cytoplasm</keyword>
<keyword id="KW-1185">Reference proteome</keyword>
<keyword id="KW-0717">Septation</keyword>
<organism>
    <name type="scientific">Nocardioides sp. (strain ATCC BAA-499 / JS614)</name>
    <dbReference type="NCBI Taxonomy" id="196162"/>
    <lineage>
        <taxon>Bacteria</taxon>
        <taxon>Bacillati</taxon>
        <taxon>Actinomycetota</taxon>
        <taxon>Actinomycetes</taxon>
        <taxon>Propionibacteriales</taxon>
        <taxon>Nocardioidaceae</taxon>
        <taxon>Nocardioides</taxon>
    </lineage>
</organism>
<accession>A1SL74</accession>
<sequence>MSGAMRRIGEYLGLLEDTGRYDDEYGDYAGDYETQETAPVATRSSKRESRPAPVSDLSERRRPASGPTGVVAELSRITTLHPSTYNEARTVGENFRDGTPVIMNLSEMDDADAKRLVDFAAGLVFATRGTIERITNKVFLLSPPNVSVAAEDKQRIAEGGFFNQS</sequence>